<protein>
    <recommendedName>
        <fullName evidence="1 5">Lipopolysaccharide assembly protein B</fullName>
    </recommendedName>
    <alternativeName>
        <fullName evidence="1">Lipopolysaccharide regulatory protein</fullName>
    </alternativeName>
</protein>
<evidence type="ECO:0000255" key="1">
    <source>
        <dbReference type="HAMAP-Rule" id="MF_00994"/>
    </source>
</evidence>
<evidence type="ECO:0000269" key="2">
    <source>
    </source>
</evidence>
<evidence type="ECO:0000269" key="3">
    <source>
    </source>
</evidence>
<evidence type="ECO:0000269" key="4">
    <source>
    </source>
</evidence>
<evidence type="ECO:0000303" key="5">
    <source>
    </source>
</evidence>
<evidence type="ECO:0000305" key="6"/>
<gene>
    <name evidence="1 5" type="primary">lapB</name>
    <name type="synonym">yciM</name>
    <name type="ordered locus">b1280</name>
    <name type="ordered locus">JW1272</name>
</gene>
<accession>P0AB58</accession>
<accession>P45576</accession>
<accession>P76836</accession>
<sequence length="389" mass="44531">MLELLFLLLPVAAAYGWYMGRRSAQQNKQDEANRLSRDYVAGVNFLLSNQQDKAVDLFLDMLKEDTGTVEAHLTLGNLFRSRGEVDRAIRIHQTLMESASLTYEQRLLAIQQLGRDYMAAGLYDRAEDMFNQLTDETDFRIGALQQLLQIYQATSEWQKAIDVAERLVKLGKDKQRVEIAHFYCELALQHMASDDLDRAMTLLKKGAAADKNSARVSIMMGRVFMAKGEYAKAVESLQRVISQDRELVSETLEMLQTCYQQLGKTAEWAEFLQRAVEENTGADAELMLADIIEARDGSEAAQVYITRQLQRHPTMRVFHKLMDYHLNEAEEGRAKESLMVLRDMVGEKVRSKPRYRCQKCGFTAYTLYWHCPSCRAWSTIKPIRGLDGL</sequence>
<organism>
    <name type="scientific">Escherichia coli (strain K12)</name>
    <dbReference type="NCBI Taxonomy" id="83333"/>
    <lineage>
        <taxon>Bacteria</taxon>
        <taxon>Pseudomonadati</taxon>
        <taxon>Pseudomonadota</taxon>
        <taxon>Gammaproteobacteria</taxon>
        <taxon>Enterobacterales</taxon>
        <taxon>Enterobacteriaceae</taxon>
        <taxon>Escherichia</taxon>
    </lineage>
</organism>
<feature type="chain" id="PRO_0000013830" description="Lipopolysaccharide assembly protein B">
    <location>
        <begin position="1"/>
        <end position="389"/>
    </location>
</feature>
<feature type="transmembrane region" description="Helical" evidence="1 2">
    <location>
        <begin position="1"/>
        <end position="20"/>
    </location>
</feature>
<feature type="topological domain" description="Cytoplasmic" evidence="1 2">
    <location>
        <begin position="21"/>
        <end position="389"/>
    </location>
</feature>
<feature type="repeat" description="TPR 1" evidence="1">
    <location>
        <begin position="35"/>
        <end position="68"/>
    </location>
</feature>
<feature type="repeat" description="TPR 2" evidence="1">
    <location>
        <begin position="69"/>
        <end position="102"/>
    </location>
</feature>
<feature type="repeat" description="TPR 3" evidence="1">
    <location>
        <begin position="107"/>
        <end position="140"/>
    </location>
</feature>
<feature type="repeat" description="TPR 4" evidence="1">
    <location>
        <begin position="142"/>
        <end position="174"/>
    </location>
</feature>
<feature type="repeat" description="TPR 5" evidence="1">
    <location>
        <begin position="180"/>
        <end position="213"/>
    </location>
</feature>
<feature type="repeat" description="TPR 6" evidence="1">
    <location>
        <begin position="214"/>
        <end position="247"/>
    </location>
</feature>
<feature type="repeat" description="TPR 7" evidence="1">
    <location>
        <begin position="249"/>
        <end position="282"/>
    </location>
</feature>
<feature type="binding site" evidence="1 2">
    <location>
        <position position="357"/>
    </location>
    <ligand>
        <name>Fe cation</name>
        <dbReference type="ChEBI" id="CHEBI:24875"/>
    </ligand>
</feature>
<feature type="binding site" evidence="1 2">
    <location>
        <position position="360"/>
    </location>
    <ligand>
        <name>Fe cation</name>
        <dbReference type="ChEBI" id="CHEBI:24875"/>
    </ligand>
</feature>
<feature type="binding site" evidence="1 2">
    <location>
        <position position="371"/>
    </location>
    <ligand>
        <name>Fe cation</name>
        <dbReference type="ChEBI" id="CHEBI:24875"/>
    </ligand>
</feature>
<feature type="binding site" evidence="1 2">
    <location>
        <position position="374"/>
    </location>
    <ligand>
        <name>Fe cation</name>
        <dbReference type="ChEBI" id="CHEBI:24875"/>
    </ligand>
</feature>
<feature type="mutagenesis site" description="Does not affect metal binding; when associated with S-258." evidence="2">
    <original>C</original>
    <variation>S</variation>
    <location>
        <position position="184"/>
    </location>
</feature>
<feature type="mutagenesis site" description="Does not affect metal binding; when associated with S-184." evidence="2">
    <original>C</original>
    <variation>S</variation>
    <location>
        <position position="258"/>
    </location>
</feature>
<feature type="mutagenesis site" description="Lack of activity; when associated with S-360; S-371 and S-374." evidence="2">
    <original>C</original>
    <variation>S</variation>
    <location>
        <position position="357"/>
    </location>
</feature>
<feature type="mutagenesis site" description="Lack of activity; when associated with S-357; S-371 and S-374." evidence="2">
    <original>C</original>
    <variation>S</variation>
    <location>
        <position position="360"/>
    </location>
</feature>
<feature type="mutagenesis site" description="Lack of activity." evidence="4">
    <original>C</original>
    <variation>R</variation>
    <location>
        <position position="371"/>
    </location>
</feature>
<feature type="mutagenesis site" description="Lack of activity; when associated with S-357; S-360 and S-374." evidence="2">
    <original>C</original>
    <variation>S</variation>
    <location>
        <position position="371"/>
    </location>
</feature>
<feature type="mutagenesis site" description="Lack of activity." evidence="4">
    <original>P</original>
    <variation>L</variation>
    <location>
        <position position="372"/>
    </location>
</feature>
<feature type="mutagenesis site" description="Lack of activity; when associated with S-357; S-360 and S-371." evidence="2">
    <original>C</original>
    <variation>S</variation>
    <location>
        <position position="374"/>
    </location>
</feature>
<feature type="mutagenesis site" description="Lack of activity." evidence="4">
    <original>S</original>
    <variation>P</variation>
    <location>
        <position position="378"/>
    </location>
</feature>
<comment type="function">
    <text evidence="1 3 4">Modulates cellular lipopolysaccharide (LPS) levels by regulating LpxC, which is involved in lipid A biosynthesis. May act by modulating the proteolytic activity of FtsH towards LpxC. May also coordinate assembly of proteins involved in LPS synthesis at the plasma membrane.</text>
</comment>
<comment type="subcellular location">
    <subcellularLocation>
        <location evidence="1 2 4">Cell inner membrane</location>
        <topology evidence="1 2">Single-pass membrane protein</topology>
        <orientation evidence="1 2">Cytoplasmic side</orientation>
    </subcellularLocation>
</comment>
<comment type="induction">
    <text evidence="3 4">Induced by heat shock, via RpoH.</text>
</comment>
<comment type="domain">
    <text evidence="2">The membrane anchor N-terminal domain is required for activity. The iron-binding domain is required for protein stability and function.</text>
</comment>
<comment type="disruption phenotype">
    <text evidence="2 4">Deletion leads to changes in cell morphology and to the formation of bulges that contain cytoplasmic material and cause cell lysis. Mutants exhibit increased sensitivity to rifampicin and novobiocin, and to a mixture of SDS and EDTA. Growth is severely affected by osmolarity and temperature (PubMed:24187084). Mutant accumulates precursor forms of LPS and exhibits elevated levels of LpxC (PubMed:24722986).</text>
</comment>
<comment type="similarity">
    <text evidence="1 6">Belongs to the LapB family.</text>
</comment>
<proteinExistence type="evidence at protein level"/>
<keyword id="KW-0002">3D-structure</keyword>
<keyword id="KW-0997">Cell inner membrane</keyword>
<keyword id="KW-1003">Cell membrane</keyword>
<keyword id="KW-0408">Iron</keyword>
<keyword id="KW-0472">Membrane</keyword>
<keyword id="KW-0479">Metal-binding</keyword>
<keyword id="KW-1185">Reference proteome</keyword>
<keyword id="KW-0677">Repeat</keyword>
<keyword id="KW-0346">Stress response</keyword>
<keyword id="KW-0802">TPR repeat</keyword>
<keyword id="KW-0812">Transmembrane</keyword>
<keyword id="KW-1133">Transmembrane helix</keyword>
<reference key="1">
    <citation type="journal article" date="1996" name="DNA Res.">
        <title>A 570-kb DNA sequence of the Escherichia coli K-12 genome corresponding to the 28.0-40.1 min region on the linkage map.</title>
        <authorList>
            <person name="Aiba H."/>
            <person name="Baba T."/>
            <person name="Fujita K."/>
            <person name="Hayashi K."/>
            <person name="Inada T."/>
            <person name="Isono K."/>
            <person name="Itoh T."/>
            <person name="Kasai H."/>
            <person name="Kashimoto K."/>
            <person name="Kimura S."/>
            <person name="Kitakawa M."/>
            <person name="Kitagawa M."/>
            <person name="Makino K."/>
            <person name="Miki T."/>
            <person name="Mizobuchi K."/>
            <person name="Mori H."/>
            <person name="Mori T."/>
            <person name="Motomura K."/>
            <person name="Nakade S."/>
            <person name="Nakamura Y."/>
            <person name="Nashimoto H."/>
            <person name="Nishio Y."/>
            <person name="Oshima T."/>
            <person name="Saito N."/>
            <person name="Sampei G."/>
            <person name="Seki Y."/>
            <person name="Sivasundaram S."/>
            <person name="Tagami H."/>
            <person name="Takeda J."/>
            <person name="Takemoto K."/>
            <person name="Takeuchi Y."/>
            <person name="Wada C."/>
            <person name="Yamamoto Y."/>
            <person name="Horiuchi T."/>
        </authorList>
    </citation>
    <scope>NUCLEOTIDE SEQUENCE [LARGE SCALE GENOMIC DNA]</scope>
    <source>
        <strain>K12 / W3110 / ATCC 27325 / DSM 5911</strain>
    </source>
</reference>
<reference key="2">
    <citation type="journal article" date="1997" name="Science">
        <title>The complete genome sequence of Escherichia coli K-12.</title>
        <authorList>
            <person name="Blattner F.R."/>
            <person name="Plunkett G. III"/>
            <person name="Bloch C.A."/>
            <person name="Perna N.T."/>
            <person name="Burland V."/>
            <person name="Riley M."/>
            <person name="Collado-Vides J."/>
            <person name="Glasner J.D."/>
            <person name="Rode C.K."/>
            <person name="Mayhew G.F."/>
            <person name="Gregor J."/>
            <person name="Davis N.W."/>
            <person name="Kirkpatrick H.A."/>
            <person name="Goeden M.A."/>
            <person name="Rose D.J."/>
            <person name="Mau B."/>
            <person name="Shao Y."/>
        </authorList>
    </citation>
    <scope>NUCLEOTIDE SEQUENCE [LARGE SCALE GENOMIC DNA]</scope>
    <source>
        <strain>K12 / MG1655 / ATCC 47076</strain>
    </source>
</reference>
<reference key="3">
    <citation type="journal article" date="2006" name="Mol. Syst. Biol.">
        <title>Highly accurate genome sequences of Escherichia coli K-12 strains MG1655 and W3110.</title>
        <authorList>
            <person name="Hayashi K."/>
            <person name="Morooka N."/>
            <person name="Yamamoto Y."/>
            <person name="Fujita K."/>
            <person name="Isono K."/>
            <person name="Choi S."/>
            <person name="Ohtsubo E."/>
            <person name="Baba T."/>
            <person name="Wanner B.L."/>
            <person name="Mori H."/>
            <person name="Horiuchi T."/>
        </authorList>
    </citation>
    <scope>NUCLEOTIDE SEQUENCE [LARGE SCALE GENOMIC DNA]</scope>
    <source>
        <strain>K12 / W3110 / ATCC 27325 / DSM 5911</strain>
    </source>
</reference>
<reference key="4">
    <citation type="journal article" date="1988" name="Cell">
        <title>A consensus sequence of three DNA replication terminus sites on the E. coli chromosome is highly homologous to the terR sites of the R6K plasmid.</title>
        <authorList>
            <person name="Hidaka M."/>
            <person name="Akiyama M."/>
            <person name="Horiuchi T."/>
        </authorList>
    </citation>
    <scope>NUCLEOTIDE SEQUENCE [GENOMIC DNA] OF 308-389</scope>
</reference>
<reference key="5">
    <citation type="journal article" date="1995" name="Nucleic Acids Res.">
        <title>Detection of new genes in a bacterial genome using Markov models for three gene classes.</title>
        <authorList>
            <person name="Borodovsky M."/>
            <person name="McIninch J."/>
            <person name="Koonin E.V."/>
            <person name="Rudd K.E."/>
            <person name="Medigue C."/>
            <person name="Danchin A."/>
        </authorList>
    </citation>
    <scope>IDENTIFICATION</scope>
</reference>
<reference key="6">
    <citation type="journal article" date="2014" name="J. Bacteriol.">
        <title>Insights into the function of YciM, a heat shock membrane protein required to maintain envelope integrity in Escherichia coli.</title>
        <authorList>
            <person name="Nicolaes V."/>
            <person name="El Hajjaji H."/>
            <person name="Davis R.M."/>
            <person name="Van der Henst C."/>
            <person name="Depuydt M."/>
            <person name="Leverrier P."/>
            <person name="Aertsen A."/>
            <person name="Haufroid V."/>
            <person name="Ollagnier de Choudens S."/>
            <person name="De Bolle X."/>
            <person name="Ruiz N."/>
            <person name="Collet J.F."/>
        </authorList>
    </citation>
    <scope>SUBCELLULAR LOCATION</scope>
    <scope>TOPOLOGY</scope>
    <scope>DISRUPTION PHENOTYPE</scope>
    <scope>DOMAIN</scope>
    <scope>IRON-BINDING</scope>
    <scope>MUTAGENESIS OF CYS-184; CYS-258; CYS-357; CYS-360; CYS-371 AND CYS-374</scope>
    <source>
        <strain>K12 / MC1000 / ATCC 39531</strain>
    </source>
</reference>
<reference key="7">
    <citation type="journal article" date="2014" name="J. Biol. Chem.">
        <title>Assembly of lipopolysaccharide in Escherichia coli requires the essential LapB heat shock protein.</title>
        <authorList>
            <person name="Klein G."/>
            <person name="Kobylak N."/>
            <person name="Lindner B."/>
            <person name="Stupak A."/>
            <person name="Raina S."/>
        </authorList>
    </citation>
    <scope>FUNCTION</scope>
    <scope>SUBCELLULAR LOCATION</scope>
    <scope>INDUCTION</scope>
    <scope>DISRUPTION PHENOTYPE</scope>
    <scope>MUTAGENESIS OF CYS-371; PRO-372 AND SER-378</scope>
</reference>
<reference key="8">
    <citation type="journal article" date="2014" name="Mol. Microbiol.">
        <title>yciM is an essential gene required for regulation of lipopolysaccharide synthesis in Escherichia coli.</title>
        <authorList>
            <person name="Mahalakshmi S."/>
            <person name="Sunayana M.R."/>
            <person name="SaiSree L."/>
            <person name="Reddy M."/>
        </authorList>
    </citation>
    <scope>FUNCTION</scope>
    <scope>INDUCTION</scope>
    <source>
        <strain>K12 / MG1655 / ATCC 47076</strain>
    </source>
</reference>
<name>LAPB_ECOLI</name>
<dbReference type="EMBL" id="U00096">
    <property type="protein sequence ID" value="AAC74362.1"/>
    <property type="molecule type" value="Genomic_DNA"/>
</dbReference>
<dbReference type="EMBL" id="AP009048">
    <property type="protein sequence ID" value="BAA14834.1"/>
    <property type="molecule type" value="Genomic_DNA"/>
</dbReference>
<dbReference type="EMBL" id="M23250">
    <property type="status" value="NOT_ANNOTATED_CDS"/>
    <property type="molecule type" value="Genomic_DNA"/>
</dbReference>
<dbReference type="PIR" id="C64876">
    <property type="entry name" value="C64876"/>
</dbReference>
<dbReference type="RefSeq" id="NP_415796.1">
    <property type="nucleotide sequence ID" value="NC_000913.3"/>
</dbReference>
<dbReference type="RefSeq" id="WP_000891353.1">
    <property type="nucleotide sequence ID" value="NZ_STEB01000005.1"/>
</dbReference>
<dbReference type="PDB" id="7T6D">
    <property type="method" value="EM"/>
    <property type="resolution" value="3.90 A"/>
    <property type="chains" value="A/B=1-389"/>
</dbReference>
<dbReference type="PDBsum" id="7T6D"/>
<dbReference type="SMR" id="P0AB58"/>
<dbReference type="BioGRID" id="4259400">
    <property type="interactions" value="57"/>
</dbReference>
<dbReference type="DIP" id="DIP-48161N"/>
<dbReference type="FunCoup" id="P0AB58">
    <property type="interactions" value="141"/>
</dbReference>
<dbReference type="IntAct" id="P0AB58">
    <property type="interactions" value="1"/>
</dbReference>
<dbReference type="STRING" id="511145.b1280"/>
<dbReference type="jPOST" id="P0AB58"/>
<dbReference type="PaxDb" id="511145-b1280"/>
<dbReference type="EnsemblBacteria" id="AAC74362">
    <property type="protein sequence ID" value="AAC74362"/>
    <property type="gene ID" value="b1280"/>
</dbReference>
<dbReference type="GeneID" id="93775403"/>
<dbReference type="GeneID" id="944858"/>
<dbReference type="KEGG" id="ecj:JW1272"/>
<dbReference type="KEGG" id="eco:b1280"/>
<dbReference type="KEGG" id="ecoc:C3026_07515"/>
<dbReference type="PATRIC" id="fig|1411691.4.peg.1001"/>
<dbReference type="EchoBASE" id="EB2554"/>
<dbReference type="eggNOG" id="COG2956">
    <property type="taxonomic scope" value="Bacteria"/>
</dbReference>
<dbReference type="HOGENOM" id="CLU_059365_1_0_6"/>
<dbReference type="InParanoid" id="P0AB58"/>
<dbReference type="OMA" id="FWQCPGC"/>
<dbReference type="OrthoDB" id="507476at2"/>
<dbReference type="PhylomeDB" id="P0AB58"/>
<dbReference type="BioCyc" id="EcoCyc:EG12691-MONOMER"/>
<dbReference type="PRO" id="PR:P0AB58"/>
<dbReference type="Proteomes" id="UP000000625">
    <property type="component" value="Chromosome"/>
</dbReference>
<dbReference type="GO" id="GO:0009898">
    <property type="term" value="C:cytoplasmic side of plasma membrane"/>
    <property type="evidence" value="ECO:0007669"/>
    <property type="project" value="UniProtKB-UniRule"/>
</dbReference>
<dbReference type="GO" id="GO:0005829">
    <property type="term" value="C:cytosol"/>
    <property type="evidence" value="ECO:0000314"/>
    <property type="project" value="EcoCyc"/>
</dbReference>
<dbReference type="GO" id="GO:0005886">
    <property type="term" value="C:plasma membrane"/>
    <property type="evidence" value="ECO:0000314"/>
    <property type="project" value="EcoCyc"/>
</dbReference>
<dbReference type="GO" id="GO:0005506">
    <property type="term" value="F:iron ion binding"/>
    <property type="evidence" value="ECO:0007669"/>
    <property type="project" value="UniProtKB-UniRule"/>
</dbReference>
<dbReference type="GO" id="GO:0046872">
    <property type="term" value="F:metal ion binding"/>
    <property type="evidence" value="ECO:0000314"/>
    <property type="project" value="EcoCyc"/>
</dbReference>
<dbReference type="GO" id="GO:0008653">
    <property type="term" value="P:lipopolysaccharide metabolic process"/>
    <property type="evidence" value="ECO:0007669"/>
    <property type="project" value="InterPro"/>
</dbReference>
<dbReference type="GO" id="GO:0046890">
    <property type="term" value="P:regulation of lipid biosynthetic process"/>
    <property type="evidence" value="ECO:0007669"/>
    <property type="project" value="UniProtKB-UniRule"/>
</dbReference>
<dbReference type="FunFam" id="1.25.40.10:FF:000033">
    <property type="entry name" value="Lipopolysaccharide assembly protein B"/>
    <property type="match status" value="1"/>
</dbReference>
<dbReference type="Gene3D" id="1.25.40.10">
    <property type="entry name" value="Tetratricopeptide repeat domain"/>
    <property type="match status" value="2"/>
</dbReference>
<dbReference type="HAMAP" id="MF_00994">
    <property type="entry name" value="LPS_assembly_LapB"/>
    <property type="match status" value="1"/>
</dbReference>
<dbReference type="InterPro" id="IPR051012">
    <property type="entry name" value="CellSynth/LPSAsmb/PSIAsmb"/>
</dbReference>
<dbReference type="InterPro" id="IPR030865">
    <property type="entry name" value="LapB"/>
</dbReference>
<dbReference type="InterPro" id="IPR041166">
    <property type="entry name" value="Rubredoxin_2"/>
</dbReference>
<dbReference type="InterPro" id="IPR011990">
    <property type="entry name" value="TPR-like_helical_dom_sf"/>
</dbReference>
<dbReference type="InterPro" id="IPR019734">
    <property type="entry name" value="TPR_rpt"/>
</dbReference>
<dbReference type="NCBIfam" id="NF008753">
    <property type="entry name" value="PRK11788.1-1"/>
    <property type="match status" value="1"/>
</dbReference>
<dbReference type="NCBIfam" id="NF008756">
    <property type="entry name" value="PRK11788.1-4"/>
    <property type="match status" value="1"/>
</dbReference>
<dbReference type="NCBIfam" id="NF008757">
    <property type="entry name" value="PRK11788.1-5"/>
    <property type="match status" value="1"/>
</dbReference>
<dbReference type="PANTHER" id="PTHR45586:SF1">
    <property type="entry name" value="LIPOPOLYSACCHARIDE ASSEMBLY PROTEIN B"/>
    <property type="match status" value="1"/>
</dbReference>
<dbReference type="PANTHER" id="PTHR45586">
    <property type="entry name" value="TPR REPEAT-CONTAINING PROTEIN PA4667"/>
    <property type="match status" value="1"/>
</dbReference>
<dbReference type="Pfam" id="PF14559">
    <property type="entry name" value="TPR_19"/>
    <property type="match status" value="1"/>
</dbReference>
<dbReference type="Pfam" id="PF13176">
    <property type="entry name" value="TPR_7"/>
    <property type="match status" value="1"/>
</dbReference>
<dbReference type="Pfam" id="PF18073">
    <property type="entry name" value="Zn_ribbon_LapB"/>
    <property type="match status" value="1"/>
</dbReference>
<dbReference type="SMART" id="SM00028">
    <property type="entry name" value="TPR"/>
    <property type="match status" value="5"/>
</dbReference>
<dbReference type="SUPFAM" id="SSF48452">
    <property type="entry name" value="TPR-like"/>
    <property type="match status" value="2"/>
</dbReference>
<dbReference type="PROSITE" id="PS50005">
    <property type="entry name" value="TPR"/>
    <property type="match status" value="6"/>
</dbReference>
<dbReference type="PROSITE" id="PS50293">
    <property type="entry name" value="TPR_REGION"/>
    <property type="match status" value="1"/>
</dbReference>